<gene>
    <name type="primary">vspR</name>
    <name type="ordered locus">VC_0177</name>
</gene>
<proteinExistence type="evidence at transcript level"/>
<keyword id="KW-0238">DNA-binding</keyword>
<keyword id="KW-1185">Reference proteome</keyword>
<keyword id="KW-0678">Repressor</keyword>
<keyword id="KW-0804">Transcription</keyword>
<keyword id="KW-0805">Transcription regulation</keyword>
<accession>Q9KVG9</accession>
<reference key="1">
    <citation type="journal article" date="2000" name="Nature">
        <title>DNA sequence of both chromosomes of the cholera pathogen Vibrio cholerae.</title>
        <authorList>
            <person name="Heidelberg J.F."/>
            <person name="Eisen J.A."/>
            <person name="Nelson W.C."/>
            <person name="Clayton R.A."/>
            <person name="Gwinn M.L."/>
            <person name="Dodson R.J."/>
            <person name="Haft D.H."/>
            <person name="Hickey E.K."/>
            <person name="Peterson J.D."/>
            <person name="Umayam L.A."/>
            <person name="Gill S.R."/>
            <person name="Nelson K.E."/>
            <person name="Read T.D."/>
            <person name="Tettelin H."/>
            <person name="Richardson D.L."/>
            <person name="Ermolaeva M.D."/>
            <person name="Vamathevan J.J."/>
            <person name="Bass S."/>
            <person name="Qin H."/>
            <person name="Dragoi I."/>
            <person name="Sellers P."/>
            <person name="McDonald L.A."/>
            <person name="Utterback T.R."/>
            <person name="Fleischmann R.D."/>
            <person name="Nierman W.C."/>
            <person name="White O."/>
            <person name="Salzberg S.L."/>
            <person name="Smith H.O."/>
            <person name="Colwell R.R."/>
            <person name="Mekalanos J.J."/>
            <person name="Venter J.C."/>
            <person name="Fraser C.M."/>
        </authorList>
    </citation>
    <scope>NUCLEOTIDE SEQUENCE [LARGE SCALE GENOMIC DNA]</scope>
    <source>
        <strain>ATCC 39315 / El Tor Inaba N16961</strain>
    </source>
</reference>
<reference key="2">
    <citation type="journal article" date="2012" name="Cell">
        <title>Coordinated regulation of accessory genetic elements produces cyclic di-nucleotides for V. cholerae virulence.</title>
        <authorList>
            <person name="Davies B.W."/>
            <person name="Bogard R.W."/>
            <person name="Young T.S."/>
            <person name="Mekalanos J.J."/>
        </authorList>
    </citation>
    <scope>FUNCTION</scope>
    <scope>GENE NAME</scope>
    <scope>INDUCTION</scope>
    <source>
        <strain>ATCC 55056 / El Tor Ogawa E7946</strain>
        <strain>El Tor C6706</strain>
    </source>
</reference>
<feature type="chain" id="PRO_0000423946" description="Transcriptional regulator VspR">
    <location>
        <begin position="1"/>
        <end position="187"/>
    </location>
</feature>
<name>VSPR_VIBCH</name>
<comment type="function">
    <text evidence="1">Represses the transcription of several genes encoded within the Vibrio 7th pandemic island-1 (VSP-1), including dncV, VC_0176, VC_0178 and VC_0180.</text>
</comment>
<comment type="induction">
    <text evidence="1">Expression is repressed by the TCP island-encoded sRNA TarB.</text>
</comment>
<sequence length="187" mass="21757">MRRSMKISAEMYKLLIERTLDGFSVIELRDEFIVIKDSLIDPDEAYKKVYRQILRFIKKGWLNGEGSGRQKRYFQTDTFKALHAEPKSENVDIEIVLNQDYSVLVSERNQYKGELEIVLGEIDEYQSLNIRFPELEPKLITLLDEAKERSACLLGKVNGLTNVLKVLSGQKIVHQKFKTKALLFERT</sequence>
<organism>
    <name type="scientific">Vibrio cholerae serotype O1 (strain ATCC 39315 / El Tor Inaba N16961)</name>
    <dbReference type="NCBI Taxonomy" id="243277"/>
    <lineage>
        <taxon>Bacteria</taxon>
        <taxon>Pseudomonadati</taxon>
        <taxon>Pseudomonadota</taxon>
        <taxon>Gammaproteobacteria</taxon>
        <taxon>Vibrionales</taxon>
        <taxon>Vibrionaceae</taxon>
        <taxon>Vibrio</taxon>
    </lineage>
</organism>
<evidence type="ECO:0000269" key="1">
    <source>
    </source>
</evidence>
<protein>
    <recommendedName>
        <fullName>Transcriptional regulator VspR</fullName>
    </recommendedName>
    <alternativeName>
        <fullName>V.cholerae 7th pandemic regulator</fullName>
    </alternativeName>
    <alternativeName>
        <fullName>VSP-1 transcription factor VspR</fullName>
    </alternativeName>
</protein>
<dbReference type="EMBL" id="AE003852">
    <property type="protein sequence ID" value="AAF93353.1"/>
    <property type="molecule type" value="Genomic_DNA"/>
</dbReference>
<dbReference type="PIR" id="D82354">
    <property type="entry name" value="D82354"/>
</dbReference>
<dbReference type="RefSeq" id="NP_229834.1">
    <property type="nucleotide sequence ID" value="NC_002505.1"/>
</dbReference>
<dbReference type="RefSeq" id="WP_001901324.1">
    <property type="nucleotide sequence ID" value="NZ_LT906614.1"/>
</dbReference>
<dbReference type="SMR" id="Q9KVG9"/>
<dbReference type="DNASU" id="2614269"/>
<dbReference type="EnsemblBacteria" id="AAF93353">
    <property type="protein sequence ID" value="AAF93353"/>
    <property type="gene ID" value="VC_0177"/>
</dbReference>
<dbReference type="KEGG" id="vch:VC_0177"/>
<dbReference type="eggNOG" id="ENOG5032UH6">
    <property type="taxonomic scope" value="Bacteria"/>
</dbReference>
<dbReference type="HOGENOM" id="CLU_122379_1_0_6"/>
<dbReference type="Proteomes" id="UP000000584">
    <property type="component" value="Chromosome 1"/>
</dbReference>
<dbReference type="GO" id="GO:0003677">
    <property type="term" value="F:DNA binding"/>
    <property type="evidence" value="ECO:0007669"/>
    <property type="project" value="UniProtKB-KW"/>
</dbReference>
<dbReference type="GO" id="GO:0003700">
    <property type="term" value="F:DNA-binding transcription factor activity"/>
    <property type="evidence" value="ECO:0000315"/>
    <property type="project" value="UniProtKB"/>
</dbReference>
<dbReference type="GO" id="GO:0045892">
    <property type="term" value="P:negative regulation of DNA-templated transcription"/>
    <property type="evidence" value="ECO:0000315"/>
    <property type="project" value="UniProtKB"/>
</dbReference>